<dbReference type="EC" id="3.1.1.106" evidence="1"/>
<dbReference type="EMBL" id="CP000964">
    <property type="protein sequence ID" value="ACI08499.1"/>
    <property type="molecule type" value="Genomic_DNA"/>
</dbReference>
<dbReference type="SMR" id="B5XXK9"/>
<dbReference type="KEGG" id="kpe:KPK_3497"/>
<dbReference type="HOGENOM" id="CLU_046550_5_1_6"/>
<dbReference type="Proteomes" id="UP000001734">
    <property type="component" value="Chromosome"/>
</dbReference>
<dbReference type="GO" id="GO:0061463">
    <property type="term" value="F:O-acetyl-ADP-ribose deacetylase activity"/>
    <property type="evidence" value="ECO:0007669"/>
    <property type="project" value="UniProtKB-EC"/>
</dbReference>
<dbReference type="GO" id="GO:0001883">
    <property type="term" value="F:purine nucleoside binding"/>
    <property type="evidence" value="ECO:0007669"/>
    <property type="project" value="UniProtKB-UniRule"/>
</dbReference>
<dbReference type="GO" id="GO:0008428">
    <property type="term" value="F:ribonuclease inhibitor activity"/>
    <property type="evidence" value="ECO:0007669"/>
    <property type="project" value="UniProtKB-UniRule"/>
</dbReference>
<dbReference type="GO" id="GO:0042278">
    <property type="term" value="P:purine nucleoside metabolic process"/>
    <property type="evidence" value="ECO:0007669"/>
    <property type="project" value="UniProtKB-UniRule"/>
</dbReference>
<dbReference type="CDD" id="cd02908">
    <property type="entry name" value="Macro_OAADPr_deacetylase"/>
    <property type="match status" value="1"/>
</dbReference>
<dbReference type="Gene3D" id="3.40.220.10">
    <property type="entry name" value="Leucine Aminopeptidase, subunit E, domain 1"/>
    <property type="match status" value="1"/>
</dbReference>
<dbReference type="HAMAP" id="MF_01205">
    <property type="entry name" value="YmdB"/>
    <property type="match status" value="1"/>
</dbReference>
<dbReference type="InterPro" id="IPR002589">
    <property type="entry name" value="Macro_dom"/>
</dbReference>
<dbReference type="InterPro" id="IPR043472">
    <property type="entry name" value="Macro_dom-like"/>
</dbReference>
<dbReference type="InterPro" id="IPR024900">
    <property type="entry name" value="O-Ac-ADP-ribose_deAcase"/>
</dbReference>
<dbReference type="NCBIfam" id="NF001660">
    <property type="entry name" value="PRK00431.1-1"/>
    <property type="match status" value="1"/>
</dbReference>
<dbReference type="NCBIfam" id="NF001664">
    <property type="entry name" value="PRK00431.1-6"/>
    <property type="match status" value="1"/>
</dbReference>
<dbReference type="PANTHER" id="PTHR11106">
    <property type="entry name" value="GANGLIOSIDE INDUCED DIFFERENTIATION ASSOCIATED PROTEIN 2-RELATED"/>
    <property type="match status" value="1"/>
</dbReference>
<dbReference type="PANTHER" id="PTHR11106:SF27">
    <property type="entry name" value="MACRO DOMAIN-CONTAINING PROTEIN"/>
    <property type="match status" value="1"/>
</dbReference>
<dbReference type="Pfam" id="PF01661">
    <property type="entry name" value="Macro"/>
    <property type="match status" value="1"/>
</dbReference>
<dbReference type="SMART" id="SM00506">
    <property type="entry name" value="A1pp"/>
    <property type="match status" value="1"/>
</dbReference>
<dbReference type="SUPFAM" id="SSF52949">
    <property type="entry name" value="Macro domain-like"/>
    <property type="match status" value="1"/>
</dbReference>
<dbReference type="PROSITE" id="PS51154">
    <property type="entry name" value="MACRO"/>
    <property type="match status" value="1"/>
</dbReference>
<reference key="1">
    <citation type="journal article" date="2008" name="PLoS Genet.">
        <title>Complete genome sequence of the N2-fixing broad host range endophyte Klebsiella pneumoniae 342 and virulence predictions verified in mice.</title>
        <authorList>
            <person name="Fouts D.E."/>
            <person name="Tyler H.L."/>
            <person name="DeBoy R.T."/>
            <person name="Daugherty S."/>
            <person name="Ren Q."/>
            <person name="Badger J.H."/>
            <person name="Durkin A.S."/>
            <person name="Huot H."/>
            <person name="Shrivastava S."/>
            <person name="Kothari S."/>
            <person name="Dodson R.J."/>
            <person name="Mohamoud Y."/>
            <person name="Khouri H."/>
            <person name="Roesch L.F.W."/>
            <person name="Krogfelt K.A."/>
            <person name="Struve C."/>
            <person name="Triplett E.W."/>
            <person name="Methe B.A."/>
        </authorList>
    </citation>
    <scope>NUCLEOTIDE SEQUENCE [LARGE SCALE GENOMIC DNA]</scope>
    <source>
        <strain>342</strain>
    </source>
</reference>
<evidence type="ECO:0000255" key="1">
    <source>
        <dbReference type="HAMAP-Rule" id="MF_01205"/>
    </source>
</evidence>
<feature type="chain" id="PRO_0000409479" description="O-acetyl-ADP-ribose deacetylase">
    <location>
        <begin position="1"/>
        <end position="175"/>
    </location>
</feature>
<feature type="domain" description="Macro" evidence="1">
    <location>
        <begin position="1"/>
        <end position="175"/>
    </location>
</feature>
<feature type="active site" description="Proton acceptor" evidence="1">
    <location>
        <position position="35"/>
    </location>
</feature>
<feature type="binding site" evidence="1">
    <location>
        <begin position="11"/>
        <end position="12"/>
    </location>
    <ligand>
        <name>substrate</name>
    </ligand>
</feature>
<feature type="binding site" evidence="1">
    <location>
        <position position="25"/>
    </location>
    <ligand>
        <name>substrate</name>
    </ligand>
</feature>
<feature type="binding site" evidence="1">
    <location>
        <begin position="33"/>
        <end position="35"/>
    </location>
    <ligand>
        <name>substrate</name>
    </ligand>
</feature>
<feature type="binding site" evidence="1">
    <location>
        <begin position="122"/>
        <end position="126"/>
    </location>
    <ligand>
        <name>substrate</name>
    </ligand>
</feature>
<name>YMDB_KLEP3</name>
<comment type="function">
    <text evidence="1">Deacetylates O-acetyl-ADP ribose to yield ADP-ribose and free acetate. Down-regulates ribonuclease 3 (RNase III) activity. Acts by interacting directly with the region of the ribonuclease that is required for dimerization/activation.</text>
</comment>
<comment type="catalytic activity">
    <reaction evidence="1">
        <text>3''-O-acetyl-ADP-D-ribose + H2O = ADP-D-ribose + acetate + H(+)</text>
        <dbReference type="Rhea" id="RHEA:59244"/>
        <dbReference type="ChEBI" id="CHEBI:15377"/>
        <dbReference type="ChEBI" id="CHEBI:15378"/>
        <dbReference type="ChEBI" id="CHEBI:30089"/>
        <dbReference type="ChEBI" id="CHEBI:57967"/>
        <dbReference type="ChEBI" id="CHEBI:142723"/>
        <dbReference type="EC" id="3.1.1.106"/>
    </reaction>
</comment>
<comment type="catalytic activity">
    <reaction evidence="1">
        <text>2''-O-acetyl-ADP-D-ribose + H2O = ADP-D-ribose + acetate + H(+)</text>
        <dbReference type="Rhea" id="RHEA:57060"/>
        <dbReference type="ChEBI" id="CHEBI:15377"/>
        <dbReference type="ChEBI" id="CHEBI:15378"/>
        <dbReference type="ChEBI" id="CHEBI:30089"/>
        <dbReference type="ChEBI" id="CHEBI:57967"/>
        <dbReference type="ChEBI" id="CHEBI:83767"/>
        <dbReference type="EC" id="3.1.1.106"/>
    </reaction>
</comment>
<comment type="subunit">
    <text evidence="1">Homodimer. Interacts with RNase III.</text>
</comment>
<comment type="similarity">
    <text evidence="1">Belongs to the MacroD-type family. YmdB subfamily.</text>
</comment>
<protein>
    <recommendedName>
        <fullName evidence="1">O-acetyl-ADP-ribose deacetylase</fullName>
        <ecNumber evidence="1">3.1.1.106</ecNumber>
    </recommendedName>
    <alternativeName>
        <fullName evidence="1">Regulator of RNase III activity</fullName>
    </alternativeName>
</protein>
<organism>
    <name type="scientific">Klebsiella pneumoniae (strain 342)</name>
    <dbReference type="NCBI Taxonomy" id="507522"/>
    <lineage>
        <taxon>Bacteria</taxon>
        <taxon>Pseudomonadati</taxon>
        <taxon>Pseudomonadota</taxon>
        <taxon>Gammaproteobacteria</taxon>
        <taxon>Enterobacterales</taxon>
        <taxon>Enterobacteriaceae</taxon>
        <taxon>Klebsiella/Raoultella group</taxon>
        <taxon>Klebsiella</taxon>
        <taxon>Klebsiella pneumoniae complex</taxon>
    </lineage>
</organism>
<keyword id="KW-0378">Hydrolase</keyword>
<sequence>MAVQPEVILGDITTLEVDVIVNAANPSLLGGGGVDGAIHRAAGPALLAACKQVLQQQGECPPGHAVITIAGDLPASAVIHTVGPVWHGGDRMEAQTLADAYKNSLQLAAANNYRSIAFPAISTGVYGYPKEEAAEIAVRTVTAFLTRYNPLERVLFVCFDEETAAIYRRLLASYP</sequence>
<accession>B5XXK9</accession>
<proteinExistence type="inferred from homology"/>
<gene>
    <name evidence="1" type="primary">ymdB</name>
    <name type="ordered locus">KPK_3497</name>
</gene>